<dbReference type="EC" id="2.7.1.39" evidence="1"/>
<dbReference type="EMBL" id="BX548174">
    <property type="protein sequence ID" value="CAE19054.1"/>
    <property type="molecule type" value="Genomic_DNA"/>
</dbReference>
<dbReference type="RefSeq" id="WP_011132229.1">
    <property type="nucleotide sequence ID" value="NC_005072.1"/>
</dbReference>
<dbReference type="SMR" id="Q7V289"/>
<dbReference type="STRING" id="59919.PMM0595"/>
<dbReference type="KEGG" id="pmm:PMM0595"/>
<dbReference type="eggNOG" id="COG0083">
    <property type="taxonomic scope" value="Bacteria"/>
</dbReference>
<dbReference type="HOGENOM" id="CLU_041243_0_2_3"/>
<dbReference type="OrthoDB" id="9769912at2"/>
<dbReference type="UniPathway" id="UPA00050">
    <property type="reaction ID" value="UER00064"/>
</dbReference>
<dbReference type="Proteomes" id="UP000001026">
    <property type="component" value="Chromosome"/>
</dbReference>
<dbReference type="GO" id="GO:0005737">
    <property type="term" value="C:cytoplasm"/>
    <property type="evidence" value="ECO:0007669"/>
    <property type="project" value="UniProtKB-SubCell"/>
</dbReference>
<dbReference type="GO" id="GO:0005524">
    <property type="term" value="F:ATP binding"/>
    <property type="evidence" value="ECO:0007669"/>
    <property type="project" value="UniProtKB-UniRule"/>
</dbReference>
<dbReference type="GO" id="GO:0004413">
    <property type="term" value="F:homoserine kinase activity"/>
    <property type="evidence" value="ECO:0007669"/>
    <property type="project" value="UniProtKB-UniRule"/>
</dbReference>
<dbReference type="GO" id="GO:0009088">
    <property type="term" value="P:threonine biosynthetic process"/>
    <property type="evidence" value="ECO:0007669"/>
    <property type="project" value="UniProtKB-UniRule"/>
</dbReference>
<dbReference type="Gene3D" id="3.30.230.10">
    <property type="match status" value="1"/>
</dbReference>
<dbReference type="Gene3D" id="3.30.70.890">
    <property type="entry name" value="GHMP kinase, C-terminal domain"/>
    <property type="match status" value="1"/>
</dbReference>
<dbReference type="HAMAP" id="MF_00384">
    <property type="entry name" value="Homoser_kinase"/>
    <property type="match status" value="1"/>
</dbReference>
<dbReference type="InterPro" id="IPR013750">
    <property type="entry name" value="GHMP_kinase_C_dom"/>
</dbReference>
<dbReference type="InterPro" id="IPR036554">
    <property type="entry name" value="GHMP_kinase_C_sf"/>
</dbReference>
<dbReference type="InterPro" id="IPR006204">
    <property type="entry name" value="GHMP_kinase_N_dom"/>
</dbReference>
<dbReference type="InterPro" id="IPR006203">
    <property type="entry name" value="GHMP_knse_ATP-bd_CS"/>
</dbReference>
<dbReference type="InterPro" id="IPR000870">
    <property type="entry name" value="Homoserine_kinase"/>
</dbReference>
<dbReference type="InterPro" id="IPR020568">
    <property type="entry name" value="Ribosomal_Su5_D2-typ_SF"/>
</dbReference>
<dbReference type="InterPro" id="IPR014721">
    <property type="entry name" value="Ribsml_uS5_D2-typ_fold_subgr"/>
</dbReference>
<dbReference type="NCBIfam" id="NF002288">
    <property type="entry name" value="PRK01212.1-4"/>
    <property type="match status" value="1"/>
</dbReference>
<dbReference type="NCBIfam" id="TIGR00191">
    <property type="entry name" value="thrB"/>
    <property type="match status" value="1"/>
</dbReference>
<dbReference type="PANTHER" id="PTHR20861:SF1">
    <property type="entry name" value="HOMOSERINE KINASE"/>
    <property type="match status" value="1"/>
</dbReference>
<dbReference type="PANTHER" id="PTHR20861">
    <property type="entry name" value="HOMOSERINE/4-DIPHOSPHOCYTIDYL-2-C-METHYL-D-ERYTHRITOL KINASE"/>
    <property type="match status" value="1"/>
</dbReference>
<dbReference type="Pfam" id="PF08544">
    <property type="entry name" value="GHMP_kinases_C"/>
    <property type="match status" value="1"/>
</dbReference>
<dbReference type="Pfam" id="PF00288">
    <property type="entry name" value="GHMP_kinases_N"/>
    <property type="match status" value="1"/>
</dbReference>
<dbReference type="PIRSF" id="PIRSF000676">
    <property type="entry name" value="Homoser_kin"/>
    <property type="match status" value="1"/>
</dbReference>
<dbReference type="PRINTS" id="PR00958">
    <property type="entry name" value="HOMSERKINASE"/>
</dbReference>
<dbReference type="SUPFAM" id="SSF55060">
    <property type="entry name" value="GHMP Kinase, C-terminal domain"/>
    <property type="match status" value="1"/>
</dbReference>
<dbReference type="SUPFAM" id="SSF54211">
    <property type="entry name" value="Ribosomal protein S5 domain 2-like"/>
    <property type="match status" value="1"/>
</dbReference>
<dbReference type="PROSITE" id="PS00627">
    <property type="entry name" value="GHMP_KINASES_ATP"/>
    <property type="match status" value="1"/>
</dbReference>
<accession>Q7V289</accession>
<gene>
    <name evidence="1" type="primary">thrB</name>
    <name type="ordered locus">PMM0595</name>
</gene>
<keyword id="KW-0028">Amino-acid biosynthesis</keyword>
<keyword id="KW-0067">ATP-binding</keyword>
<keyword id="KW-0963">Cytoplasm</keyword>
<keyword id="KW-0418">Kinase</keyword>
<keyword id="KW-0547">Nucleotide-binding</keyword>
<keyword id="KW-0791">Threonine biosynthesis</keyword>
<keyword id="KW-0808">Transferase</keyword>
<comment type="function">
    <text evidence="1">Catalyzes the ATP-dependent phosphorylation of L-homoserine to L-homoserine phosphate.</text>
</comment>
<comment type="catalytic activity">
    <reaction evidence="1">
        <text>L-homoserine + ATP = O-phospho-L-homoserine + ADP + H(+)</text>
        <dbReference type="Rhea" id="RHEA:13985"/>
        <dbReference type="ChEBI" id="CHEBI:15378"/>
        <dbReference type="ChEBI" id="CHEBI:30616"/>
        <dbReference type="ChEBI" id="CHEBI:57476"/>
        <dbReference type="ChEBI" id="CHEBI:57590"/>
        <dbReference type="ChEBI" id="CHEBI:456216"/>
        <dbReference type="EC" id="2.7.1.39"/>
    </reaction>
</comment>
<comment type="pathway">
    <text evidence="1">Amino-acid biosynthesis; L-threonine biosynthesis; L-threonine from L-aspartate: step 4/5.</text>
</comment>
<comment type="subcellular location">
    <subcellularLocation>
        <location evidence="1">Cytoplasm</location>
    </subcellularLocation>
</comment>
<comment type="similarity">
    <text evidence="1">Belongs to the GHMP kinase family. Homoserine kinase subfamily.</text>
</comment>
<protein>
    <recommendedName>
        <fullName evidence="1">Homoserine kinase</fullName>
        <shortName evidence="1">HK</shortName>
        <shortName evidence="1">HSK</shortName>
        <ecNumber evidence="1">2.7.1.39</ecNumber>
    </recommendedName>
</protein>
<feature type="chain" id="PRO_0000156599" description="Homoserine kinase">
    <location>
        <begin position="1"/>
        <end position="315"/>
    </location>
</feature>
<feature type="binding site" evidence="1">
    <location>
        <begin position="97"/>
        <end position="107"/>
    </location>
    <ligand>
        <name>ATP</name>
        <dbReference type="ChEBI" id="CHEBI:30616"/>
    </ligand>
</feature>
<proteinExistence type="inferred from homology"/>
<reference key="1">
    <citation type="journal article" date="2003" name="Nature">
        <title>Genome divergence in two Prochlorococcus ecotypes reflects oceanic niche differentiation.</title>
        <authorList>
            <person name="Rocap G."/>
            <person name="Larimer F.W."/>
            <person name="Lamerdin J.E."/>
            <person name="Malfatti S."/>
            <person name="Chain P."/>
            <person name="Ahlgren N.A."/>
            <person name="Arellano A."/>
            <person name="Coleman M."/>
            <person name="Hauser L."/>
            <person name="Hess W.R."/>
            <person name="Johnson Z.I."/>
            <person name="Land M.L."/>
            <person name="Lindell D."/>
            <person name="Post A.F."/>
            <person name="Regala W."/>
            <person name="Shah M."/>
            <person name="Shaw S.L."/>
            <person name="Steglich C."/>
            <person name="Sullivan M.B."/>
            <person name="Ting C.S."/>
            <person name="Tolonen A."/>
            <person name="Webb E.A."/>
            <person name="Zinser E.R."/>
            <person name="Chisholm S.W."/>
        </authorList>
    </citation>
    <scope>NUCLEOTIDE SEQUENCE [LARGE SCALE GENOMIC DNA]</scope>
    <source>
        <strain>CCMP1986 / NIES-2087 / MED4</strain>
    </source>
</reference>
<sequence length="315" mass="33693">MSSPEVGKKIIVTVPSTTANLGPGFDCLGAALDLYNEFIFTRIDGGRDRFDLIMESTDGNHLRGGPENLVFRAAQKVWESANIKPFALEARVKLAVPPARGLGSSATAIVAGLIGANAIMNSPLPKEKLLELAIDIEGHPDNVVPSLLGGLCLTARSSSQRWRIIRCDWHDSIKTVVAIPAIRLSTSEARRVMPKNVPISDAVTNMGALTLLLNGLKTGNDELIKEGMFDKLHEPYRWKLIKGGLEVKDAALQAGALGCAISGAGPSILALCKKDKGREVSQAMVKAWENSGVASRAPYLNVQTTGSQFRDISGK</sequence>
<name>KHSE_PROMP</name>
<evidence type="ECO:0000255" key="1">
    <source>
        <dbReference type="HAMAP-Rule" id="MF_00384"/>
    </source>
</evidence>
<organism>
    <name type="scientific">Prochlorococcus marinus subsp. pastoris (strain CCMP1986 / NIES-2087 / MED4)</name>
    <dbReference type="NCBI Taxonomy" id="59919"/>
    <lineage>
        <taxon>Bacteria</taxon>
        <taxon>Bacillati</taxon>
        <taxon>Cyanobacteriota</taxon>
        <taxon>Cyanophyceae</taxon>
        <taxon>Synechococcales</taxon>
        <taxon>Prochlorococcaceae</taxon>
        <taxon>Prochlorococcus</taxon>
    </lineage>
</organism>